<evidence type="ECO:0000250" key="1"/>
<evidence type="ECO:0000255" key="2">
    <source>
        <dbReference type="PROSITE-ProRule" id="PRU00037"/>
    </source>
</evidence>
<evidence type="ECO:0000269" key="3">
    <source>
    </source>
</evidence>
<evidence type="ECO:0000305" key="4"/>
<evidence type="ECO:0000305" key="5">
    <source>
    </source>
</evidence>
<feature type="chain" id="PRO_0000272268" description="BTB/POZ domain-containing protein FBL11">
    <location>
        <begin position="1"/>
        <end position="940"/>
    </location>
</feature>
<feature type="domain" description="BTB" evidence="2">
    <location>
        <begin position="41"/>
        <end position="109"/>
    </location>
</feature>
<feature type="domain" description="BACK">
    <location>
        <begin position="155"/>
        <end position="258"/>
    </location>
</feature>
<proteinExistence type="evidence at transcript level"/>
<accession>Q8S8F2</accession>
<accession>F4IMW4</accession>
<accession>Q0WWD2</accession>
<sequence>MALSSLVEFVILVVKNPCYQQDDASSSIQEISISASEIASWDMSEILSYGSVKVRAHRTRLIQESSYFHGLLSGSFSESGLDHISVEWNLESFLNLLMCLYGYDIEITSSSFLPLFESALYFGVEKLLSICKNWLSVLASSNDNALPKVELSDLIQIWSFGLEHAGEFVPDLCVAYLAKNFMLVKSDKYFGNVPYELLMWCVKHPHLTVHSEMDLVDGLLIWLDAGGRLSDLPESSQDNTINLMEQVRFSLLPLWFIAGRSKSHGFSKFADQSIELVTKLMKMPSTCLVDSLTDGPPTDVRVRLTEYSEILDLSGCPQLNEASLLLSILPNSYFANLRWRKSLESFLKNPDDDERHQEQISHRTLPILSFESVKEIDISKCQRLDYKVVIKCFSKSFPSLRKLRAAYLLNIKVSTLLELLLNFRELTEVDLTVDVSPIIPVQASVFYSGQGHCLLSSITRLTLEGRSDICDMELRSISRVCESLCYLNIKGCALLSDACIASVIQRCKKLCSLIVCYTSFSENSILALCATISMTNEHMDINSVASNLQTLHMSKCEGISETSLLNLITHSQKMKSLCLRDTKVSDSVLCEFPGSTLEALDISNTTISWMALARVISRNPNLKTLKARGCKNLLQLEVDGRTDNFSPLVSGQEVFKCLSKGSGLEELEIGWGFSYFSFESLRPAASFLRVISVGLGASLGEDVLKLLPSTCPLLESIVLHFQEISDSALTSVLTSLKHLQELALSYCFGEISLQSFKFSMPNLRKLRLERVTRWMTNDDLLVLTQSCPNLTELSLVGCLHLTSDCQPIISAGWPGMISLHLEECGSITENGVASLYGCIALEDLFLRHNGSGIQKSFLLDATLKFPMLRLVSLDMCDAKEGGFDVPEEKEEGRSLSIVKISRCKSDRCSLGRRAAPMHRETLVMLWNGQTLTKTLLKQRL</sequence>
<organism>
    <name type="scientific">Arabidopsis thaliana</name>
    <name type="common">Mouse-ear cress</name>
    <dbReference type="NCBI Taxonomy" id="3702"/>
    <lineage>
        <taxon>Eukaryota</taxon>
        <taxon>Viridiplantae</taxon>
        <taxon>Streptophyta</taxon>
        <taxon>Embryophyta</taxon>
        <taxon>Tracheophyta</taxon>
        <taxon>Spermatophyta</taxon>
        <taxon>Magnoliopsida</taxon>
        <taxon>eudicotyledons</taxon>
        <taxon>Gunneridae</taxon>
        <taxon>Pentapetalae</taxon>
        <taxon>rosids</taxon>
        <taxon>malvids</taxon>
        <taxon>Brassicales</taxon>
        <taxon>Brassicaceae</taxon>
        <taxon>Camelineae</taxon>
        <taxon>Arabidopsis</taxon>
    </lineage>
</organism>
<comment type="function">
    <text evidence="1">May act as a substrate-specific adapter of an E3 ubiquitin-protein ligase complex (CUL3-RBX1-BTB) which mediates the ubiquitination and subsequent proteasomal degradation of target proteins.</text>
</comment>
<comment type="pathway">
    <text>Protein modification; protein ubiquitination.</text>
</comment>
<comment type="domain">
    <text evidence="3">The BTB/POZ domain mediates the interaction with some component of ubiquitin ligase complexes.</text>
</comment>
<comment type="caution">
    <text evidence="5">Was originally thought to contain a F-box domain.</text>
</comment>
<comment type="sequence caution" evidence="4">
    <conflict type="erroneous gene model prediction">
        <sequence resource="EMBL-CDS" id="AAM15321"/>
    </conflict>
</comment>
<gene>
    <name type="primary">FBL11</name>
    <name type="ordered locus">At2g36370</name>
    <name type="ORF">F2H17.2</name>
</gene>
<dbReference type="EMBL" id="AC006921">
    <property type="protein sequence ID" value="AAM15321.1"/>
    <property type="status" value="ALT_SEQ"/>
    <property type="molecule type" value="Genomic_DNA"/>
</dbReference>
<dbReference type="EMBL" id="CP002685">
    <property type="protein sequence ID" value="AEC09245.2"/>
    <property type="molecule type" value="Genomic_DNA"/>
</dbReference>
<dbReference type="EMBL" id="AK226422">
    <property type="protein sequence ID" value="BAE98566.1"/>
    <property type="molecule type" value="mRNA"/>
</dbReference>
<dbReference type="RefSeq" id="NP_565845.3">
    <property type="nucleotide sequence ID" value="NM_129194.4"/>
</dbReference>
<dbReference type="FunCoup" id="Q8S8F2">
    <property type="interactions" value="728"/>
</dbReference>
<dbReference type="STRING" id="3702.Q8S8F2"/>
<dbReference type="iPTMnet" id="Q8S8F2"/>
<dbReference type="PaxDb" id="3702-AT2G36370.1"/>
<dbReference type="ProteomicsDB" id="222496"/>
<dbReference type="EnsemblPlants" id="AT2G36370.1">
    <property type="protein sequence ID" value="AT2G36370.1"/>
    <property type="gene ID" value="AT2G36370"/>
</dbReference>
<dbReference type="GeneID" id="818210"/>
<dbReference type="Gramene" id="AT2G36370.1">
    <property type="protein sequence ID" value="AT2G36370.1"/>
    <property type="gene ID" value="AT2G36370"/>
</dbReference>
<dbReference type="KEGG" id="ath:AT2G36370"/>
<dbReference type="Araport" id="AT2G36370"/>
<dbReference type="TAIR" id="AT2G36370"/>
<dbReference type="eggNOG" id="KOG1947">
    <property type="taxonomic scope" value="Eukaryota"/>
</dbReference>
<dbReference type="HOGENOM" id="CLU_018220_0_0_1"/>
<dbReference type="InParanoid" id="Q8S8F2"/>
<dbReference type="OMA" id="NIKGCAL"/>
<dbReference type="PhylomeDB" id="Q8S8F2"/>
<dbReference type="UniPathway" id="UPA00143"/>
<dbReference type="PRO" id="PR:Q8S8F2"/>
<dbReference type="Proteomes" id="UP000006548">
    <property type="component" value="Chromosome 2"/>
</dbReference>
<dbReference type="ExpressionAtlas" id="Q8S8F2">
    <property type="expression patterns" value="baseline and differential"/>
</dbReference>
<dbReference type="GO" id="GO:0016567">
    <property type="term" value="P:protein ubiquitination"/>
    <property type="evidence" value="ECO:0007669"/>
    <property type="project" value="UniProtKB-UniPathway"/>
</dbReference>
<dbReference type="CDD" id="cd18186">
    <property type="entry name" value="BTB_POZ_ZBTB_KLHL-like"/>
    <property type="match status" value="1"/>
</dbReference>
<dbReference type="Gene3D" id="1.25.40.420">
    <property type="match status" value="1"/>
</dbReference>
<dbReference type="Gene3D" id="3.30.710.10">
    <property type="entry name" value="Potassium Channel Kv1.1, Chain A"/>
    <property type="match status" value="1"/>
</dbReference>
<dbReference type="Gene3D" id="3.80.10.10">
    <property type="entry name" value="Ribonuclease Inhibitor"/>
    <property type="match status" value="2"/>
</dbReference>
<dbReference type="InterPro" id="IPR011705">
    <property type="entry name" value="BACK"/>
</dbReference>
<dbReference type="InterPro" id="IPR000210">
    <property type="entry name" value="BTB/POZ_dom"/>
</dbReference>
<dbReference type="InterPro" id="IPR006553">
    <property type="entry name" value="Leu-rich_rpt_Cys-con_subtyp"/>
</dbReference>
<dbReference type="InterPro" id="IPR032675">
    <property type="entry name" value="LRR_dom_sf"/>
</dbReference>
<dbReference type="InterPro" id="IPR011333">
    <property type="entry name" value="SKP1/BTB/POZ_sf"/>
</dbReference>
<dbReference type="PANTHER" id="PTHR13318">
    <property type="entry name" value="PARTNER OF PAIRED, ISOFORM B-RELATED"/>
    <property type="match status" value="1"/>
</dbReference>
<dbReference type="Pfam" id="PF07707">
    <property type="entry name" value="BACK"/>
    <property type="match status" value="1"/>
</dbReference>
<dbReference type="Pfam" id="PF00651">
    <property type="entry name" value="BTB"/>
    <property type="match status" value="1"/>
</dbReference>
<dbReference type="SMART" id="SM00875">
    <property type="entry name" value="BACK"/>
    <property type="match status" value="1"/>
</dbReference>
<dbReference type="SMART" id="SM00225">
    <property type="entry name" value="BTB"/>
    <property type="match status" value="1"/>
</dbReference>
<dbReference type="SMART" id="SM00367">
    <property type="entry name" value="LRR_CC"/>
    <property type="match status" value="5"/>
</dbReference>
<dbReference type="SUPFAM" id="SSF54695">
    <property type="entry name" value="POZ domain"/>
    <property type="match status" value="1"/>
</dbReference>
<dbReference type="SUPFAM" id="SSF52047">
    <property type="entry name" value="RNI-like"/>
    <property type="match status" value="2"/>
</dbReference>
<dbReference type="PROSITE" id="PS50097">
    <property type="entry name" value="BTB"/>
    <property type="match status" value="1"/>
</dbReference>
<reference key="1">
    <citation type="journal article" date="1999" name="Nature">
        <title>Sequence and analysis of chromosome 2 of the plant Arabidopsis thaliana.</title>
        <authorList>
            <person name="Lin X."/>
            <person name="Kaul S."/>
            <person name="Rounsley S.D."/>
            <person name="Shea T.P."/>
            <person name="Benito M.-I."/>
            <person name="Town C.D."/>
            <person name="Fujii C.Y."/>
            <person name="Mason T.M."/>
            <person name="Bowman C.L."/>
            <person name="Barnstead M.E."/>
            <person name="Feldblyum T.V."/>
            <person name="Buell C.R."/>
            <person name="Ketchum K.A."/>
            <person name="Lee J.J."/>
            <person name="Ronning C.M."/>
            <person name="Koo H.L."/>
            <person name="Moffat K.S."/>
            <person name="Cronin L.A."/>
            <person name="Shen M."/>
            <person name="Pai G."/>
            <person name="Van Aken S."/>
            <person name="Umayam L."/>
            <person name="Tallon L.J."/>
            <person name="Gill J.E."/>
            <person name="Adams M.D."/>
            <person name="Carrera A.J."/>
            <person name="Creasy T.H."/>
            <person name="Goodman H.M."/>
            <person name="Somerville C.R."/>
            <person name="Copenhaver G.P."/>
            <person name="Preuss D."/>
            <person name="Nierman W.C."/>
            <person name="White O."/>
            <person name="Eisen J.A."/>
            <person name="Salzberg S.L."/>
            <person name="Fraser C.M."/>
            <person name="Venter J.C."/>
        </authorList>
    </citation>
    <scope>NUCLEOTIDE SEQUENCE [LARGE SCALE GENOMIC DNA]</scope>
    <source>
        <strain>cv. Columbia</strain>
    </source>
</reference>
<reference key="2">
    <citation type="journal article" date="2017" name="Plant J.">
        <title>Araport11: a complete reannotation of the Arabidopsis thaliana reference genome.</title>
        <authorList>
            <person name="Cheng C.Y."/>
            <person name="Krishnakumar V."/>
            <person name="Chan A.P."/>
            <person name="Thibaud-Nissen F."/>
            <person name="Schobel S."/>
            <person name="Town C.D."/>
        </authorList>
    </citation>
    <scope>GENOME REANNOTATION</scope>
    <source>
        <strain>cv. Columbia</strain>
    </source>
</reference>
<reference key="3">
    <citation type="submission" date="2006-07" db="EMBL/GenBank/DDBJ databases">
        <title>Large-scale analysis of RIKEN Arabidopsis full-length (RAFL) cDNAs.</title>
        <authorList>
            <person name="Totoki Y."/>
            <person name="Seki M."/>
            <person name="Ishida J."/>
            <person name="Nakajima M."/>
            <person name="Enju A."/>
            <person name="Kamiya A."/>
            <person name="Narusaka M."/>
            <person name="Shin-i T."/>
            <person name="Nakagawa M."/>
            <person name="Sakamoto N."/>
            <person name="Oishi K."/>
            <person name="Kohara Y."/>
            <person name="Kobayashi M."/>
            <person name="Toyoda A."/>
            <person name="Sakaki Y."/>
            <person name="Sakurai T."/>
            <person name="Iida K."/>
            <person name="Akiyama K."/>
            <person name="Satou M."/>
            <person name="Toyoda T."/>
            <person name="Konagaya A."/>
            <person name="Carninci P."/>
            <person name="Kawai J."/>
            <person name="Hayashizaki Y."/>
            <person name="Shinozaki K."/>
        </authorList>
    </citation>
    <scope>NUCLEOTIDE SEQUENCE [LARGE SCALE MRNA] OF 10-940</scope>
    <source>
        <strain>cv. Columbia</strain>
    </source>
</reference>
<reference key="4">
    <citation type="journal article" date="2000" name="Trends Plant Sci.">
        <title>F-box proteins in Arabidopsis.</title>
        <authorList>
            <person name="Xiao W."/>
            <person name="Jang J.-C."/>
        </authorList>
    </citation>
    <scope>GENE FAMILY</scope>
    <scope>NOMENCLATURE</scope>
</reference>
<reference key="5">
    <citation type="journal article" date="2005" name="J. Biol. Chem.">
        <title>Cullins 3a and 3b assemble with members of the broad complex/tramtrack/bric-a-brac (BTB) protein family to form essential ubiquitin-protein ligases (E3s) in Arabidopsis.</title>
        <authorList>
            <person name="Gingerich D.J."/>
            <person name="Gagne J.M."/>
            <person name="Salter D.W."/>
            <person name="Hellmann H."/>
            <person name="Estelle M."/>
            <person name="Ma L."/>
            <person name="Vierstra R.D."/>
        </authorList>
    </citation>
    <scope>DOMAIN BTB</scope>
</reference>
<name>FBL11_ARATH</name>
<keyword id="KW-1185">Reference proteome</keyword>
<keyword id="KW-0833">Ubl conjugation pathway</keyword>
<protein>
    <recommendedName>
        <fullName>BTB/POZ domain-containing protein FBL11</fullName>
    </recommendedName>
</protein>